<dbReference type="EMBL" id="L77117">
    <property type="protein sequence ID" value="AAB98349.1"/>
    <property type="molecule type" value="Genomic_DNA"/>
</dbReference>
<dbReference type="PIR" id="E64344">
    <property type="entry name" value="E64344"/>
</dbReference>
<dbReference type="RefSeq" id="WP_010869856.1">
    <property type="nucleotide sequence ID" value="NC_000909.1"/>
</dbReference>
<dbReference type="SMR" id="Q57803"/>
<dbReference type="STRING" id="243232.MJ_0357"/>
<dbReference type="PaxDb" id="243232-MJ_0357"/>
<dbReference type="EnsemblBacteria" id="AAB98349">
    <property type="protein sequence ID" value="AAB98349"/>
    <property type="gene ID" value="MJ_0357"/>
</dbReference>
<dbReference type="GeneID" id="1451214"/>
<dbReference type="KEGG" id="mja:MJ_0357"/>
<dbReference type="HOGENOM" id="CLU_136678_1_0_2"/>
<dbReference type="InParanoid" id="Q57803"/>
<dbReference type="Proteomes" id="UP000000805">
    <property type="component" value="Chromosome"/>
</dbReference>
<dbReference type="GO" id="GO:0051082">
    <property type="term" value="F:unfolded protein binding"/>
    <property type="evidence" value="ECO:0007669"/>
    <property type="project" value="InterPro"/>
</dbReference>
<dbReference type="GO" id="GO:0051262">
    <property type="term" value="P:protein tetramerization"/>
    <property type="evidence" value="ECO:0007669"/>
    <property type="project" value="InterPro"/>
</dbReference>
<dbReference type="GO" id="GO:0015031">
    <property type="term" value="P:protein transport"/>
    <property type="evidence" value="ECO:0007669"/>
    <property type="project" value="InterPro"/>
</dbReference>
<dbReference type="CDD" id="cd00557">
    <property type="entry name" value="Translocase_SecB"/>
    <property type="match status" value="1"/>
</dbReference>
<dbReference type="Gene3D" id="3.10.420.10">
    <property type="entry name" value="SecB-like"/>
    <property type="match status" value="1"/>
</dbReference>
<dbReference type="InterPro" id="IPR003708">
    <property type="entry name" value="SecB"/>
</dbReference>
<dbReference type="InterPro" id="IPR035958">
    <property type="entry name" value="SecB-like_sf"/>
</dbReference>
<dbReference type="PANTHER" id="PTHR36918">
    <property type="match status" value="1"/>
</dbReference>
<dbReference type="PANTHER" id="PTHR36918:SF1">
    <property type="entry name" value="PROTEIN-EXPORT PROTEIN SECB"/>
    <property type="match status" value="1"/>
</dbReference>
<dbReference type="Pfam" id="PF02556">
    <property type="entry name" value="SecB"/>
    <property type="match status" value="1"/>
</dbReference>
<dbReference type="SUPFAM" id="SSF54611">
    <property type="entry name" value="SecB-like"/>
    <property type="match status" value="1"/>
</dbReference>
<protein>
    <recommendedName>
        <fullName>Uncharacterized protein MJ0357</fullName>
    </recommendedName>
</protein>
<keyword id="KW-1185">Reference proteome</keyword>
<organism>
    <name type="scientific">Methanocaldococcus jannaschii (strain ATCC 43067 / DSM 2661 / JAL-1 / JCM 10045 / NBRC 100440)</name>
    <name type="common">Methanococcus jannaschii</name>
    <dbReference type="NCBI Taxonomy" id="243232"/>
    <lineage>
        <taxon>Archaea</taxon>
        <taxon>Methanobacteriati</taxon>
        <taxon>Methanobacteriota</taxon>
        <taxon>Methanomada group</taxon>
        <taxon>Methanococci</taxon>
        <taxon>Methanococcales</taxon>
        <taxon>Methanocaldococcaceae</taxon>
        <taxon>Methanocaldococcus</taxon>
    </lineage>
</organism>
<reference key="1">
    <citation type="journal article" date="1996" name="Science">
        <title>Complete genome sequence of the methanogenic archaeon, Methanococcus jannaschii.</title>
        <authorList>
            <person name="Bult C.J."/>
            <person name="White O."/>
            <person name="Olsen G.J."/>
            <person name="Zhou L."/>
            <person name="Fleischmann R.D."/>
            <person name="Sutton G.G."/>
            <person name="Blake J.A."/>
            <person name="FitzGerald L.M."/>
            <person name="Clayton R.A."/>
            <person name="Gocayne J.D."/>
            <person name="Kerlavage A.R."/>
            <person name="Dougherty B.A."/>
            <person name="Tomb J.-F."/>
            <person name="Adams M.D."/>
            <person name="Reich C.I."/>
            <person name="Overbeek R."/>
            <person name="Kirkness E.F."/>
            <person name="Weinstock K.G."/>
            <person name="Merrick J.M."/>
            <person name="Glodek A."/>
            <person name="Scott J.L."/>
            <person name="Geoghagen N.S.M."/>
            <person name="Weidman J.F."/>
            <person name="Fuhrmann J.L."/>
            <person name="Nguyen D."/>
            <person name="Utterback T.R."/>
            <person name="Kelley J.M."/>
            <person name="Peterson J.D."/>
            <person name="Sadow P.W."/>
            <person name="Hanna M.C."/>
            <person name="Cotton M.D."/>
            <person name="Roberts K.M."/>
            <person name="Hurst M.A."/>
            <person name="Kaine B.P."/>
            <person name="Borodovsky M."/>
            <person name="Klenk H.-P."/>
            <person name="Fraser C.M."/>
            <person name="Smith H.O."/>
            <person name="Woese C.R."/>
            <person name="Venter J.C."/>
        </authorList>
    </citation>
    <scope>NUCLEOTIDE SEQUENCE [LARGE SCALE GENOMIC DNA]</scope>
    <source>
        <strain>ATCC 43067 / DSM 2661 / JAL-1 / JCM 10045 / NBRC 100440</strain>
    </source>
</reference>
<feature type="chain" id="PRO_0000106828" description="Uncharacterized protein MJ0357">
    <location>
        <begin position="1"/>
        <end position="155"/>
    </location>
</feature>
<sequence>MEAPPKCALKFSNYIVKHIEFILNEVPEKDEKIRLNVNIDTEIRYNKNEPNKFITIIKITAGEKKDFAKSPVYLSVEVWGFFEVIEEAIDKVRQFAEINSVAILFPYVRALISTITANANIPPVILPPINVAGMMANIEEVKEENTEKQETEAYE</sequence>
<name>Y357_METJA</name>
<gene>
    <name type="ordered locus">MJ0357</name>
</gene>
<proteinExistence type="predicted"/>
<accession>Q57803</accession>